<feature type="chain" id="PRO_1000094415" description="Shikimate kinase">
    <location>
        <begin position="1"/>
        <end position="164"/>
    </location>
</feature>
<feature type="binding site" evidence="1">
    <location>
        <begin position="10"/>
        <end position="15"/>
    </location>
    <ligand>
        <name>ATP</name>
        <dbReference type="ChEBI" id="CHEBI:30616"/>
    </ligand>
</feature>
<feature type="binding site" evidence="1">
    <location>
        <position position="14"/>
    </location>
    <ligand>
        <name>Mg(2+)</name>
        <dbReference type="ChEBI" id="CHEBI:18420"/>
    </ligand>
</feature>
<feature type="binding site" evidence="1">
    <location>
        <position position="28"/>
    </location>
    <ligand>
        <name>substrate</name>
    </ligand>
</feature>
<feature type="binding site" evidence="1">
    <location>
        <position position="52"/>
    </location>
    <ligand>
        <name>substrate</name>
    </ligand>
</feature>
<feature type="binding site" evidence="1">
    <location>
        <position position="75"/>
    </location>
    <ligand>
        <name>substrate</name>
    </ligand>
</feature>
<feature type="binding site" evidence="1">
    <location>
        <position position="116"/>
    </location>
    <ligand>
        <name>ATP</name>
        <dbReference type="ChEBI" id="CHEBI:30616"/>
    </ligand>
</feature>
<feature type="binding site" evidence="1">
    <location>
        <position position="134"/>
    </location>
    <ligand>
        <name>substrate</name>
    </ligand>
</feature>
<feature type="binding site" evidence="1">
    <location>
        <position position="151"/>
    </location>
    <ligand>
        <name>ATP</name>
        <dbReference type="ChEBI" id="CHEBI:30616"/>
    </ligand>
</feature>
<protein>
    <recommendedName>
        <fullName evidence="1">Shikimate kinase</fullName>
        <shortName evidence="1">SK</shortName>
        <ecNumber evidence="1">2.7.1.71</ecNumber>
    </recommendedName>
</protein>
<organism>
    <name type="scientific">Streptococcus equi subsp. zooepidemicus (strain MGCS10565)</name>
    <dbReference type="NCBI Taxonomy" id="552526"/>
    <lineage>
        <taxon>Bacteria</taxon>
        <taxon>Bacillati</taxon>
        <taxon>Bacillota</taxon>
        <taxon>Bacilli</taxon>
        <taxon>Lactobacillales</taxon>
        <taxon>Streptococcaceae</taxon>
        <taxon>Streptococcus</taxon>
    </lineage>
</organism>
<proteinExistence type="inferred from homology"/>
<reference key="1">
    <citation type="journal article" date="2008" name="PLoS ONE">
        <title>Genome sequence of a lancefield group C Streptococcus zooepidemicus strain causing epidemic nephritis: new information about an old disease.</title>
        <authorList>
            <person name="Beres S.B."/>
            <person name="Sesso R."/>
            <person name="Pinto S.W.L."/>
            <person name="Hoe N.P."/>
            <person name="Porcella S.F."/>
            <person name="Deleo F.R."/>
            <person name="Musser J.M."/>
        </authorList>
    </citation>
    <scope>NUCLEOTIDE SEQUENCE [LARGE SCALE GENOMIC DNA]</scope>
    <source>
        <strain>MGCS10565</strain>
    </source>
</reference>
<dbReference type="EC" id="2.7.1.71" evidence="1"/>
<dbReference type="EMBL" id="CP001129">
    <property type="protein sequence ID" value="ACG62064.1"/>
    <property type="molecule type" value="Genomic_DNA"/>
</dbReference>
<dbReference type="RefSeq" id="WP_012515340.1">
    <property type="nucleotide sequence ID" value="NC_011134.1"/>
</dbReference>
<dbReference type="SMR" id="B4U247"/>
<dbReference type="KEGG" id="sez:Sez_0701"/>
<dbReference type="HOGENOM" id="CLU_057607_4_3_9"/>
<dbReference type="UniPathway" id="UPA00053">
    <property type="reaction ID" value="UER00088"/>
</dbReference>
<dbReference type="Proteomes" id="UP000001873">
    <property type="component" value="Chromosome"/>
</dbReference>
<dbReference type="GO" id="GO:0005829">
    <property type="term" value="C:cytosol"/>
    <property type="evidence" value="ECO:0007669"/>
    <property type="project" value="TreeGrafter"/>
</dbReference>
<dbReference type="GO" id="GO:0005524">
    <property type="term" value="F:ATP binding"/>
    <property type="evidence" value="ECO:0007669"/>
    <property type="project" value="UniProtKB-UniRule"/>
</dbReference>
<dbReference type="GO" id="GO:0000287">
    <property type="term" value="F:magnesium ion binding"/>
    <property type="evidence" value="ECO:0007669"/>
    <property type="project" value="UniProtKB-UniRule"/>
</dbReference>
<dbReference type="GO" id="GO:0004765">
    <property type="term" value="F:shikimate kinase activity"/>
    <property type="evidence" value="ECO:0007669"/>
    <property type="project" value="UniProtKB-UniRule"/>
</dbReference>
<dbReference type="GO" id="GO:0008652">
    <property type="term" value="P:amino acid biosynthetic process"/>
    <property type="evidence" value="ECO:0007669"/>
    <property type="project" value="UniProtKB-KW"/>
</dbReference>
<dbReference type="GO" id="GO:0009073">
    <property type="term" value="P:aromatic amino acid family biosynthetic process"/>
    <property type="evidence" value="ECO:0007669"/>
    <property type="project" value="UniProtKB-KW"/>
</dbReference>
<dbReference type="GO" id="GO:0009423">
    <property type="term" value="P:chorismate biosynthetic process"/>
    <property type="evidence" value="ECO:0007669"/>
    <property type="project" value="UniProtKB-UniRule"/>
</dbReference>
<dbReference type="CDD" id="cd00464">
    <property type="entry name" value="SK"/>
    <property type="match status" value="1"/>
</dbReference>
<dbReference type="Gene3D" id="3.40.50.300">
    <property type="entry name" value="P-loop containing nucleotide triphosphate hydrolases"/>
    <property type="match status" value="1"/>
</dbReference>
<dbReference type="HAMAP" id="MF_00109">
    <property type="entry name" value="Shikimate_kinase"/>
    <property type="match status" value="1"/>
</dbReference>
<dbReference type="InterPro" id="IPR027417">
    <property type="entry name" value="P-loop_NTPase"/>
</dbReference>
<dbReference type="InterPro" id="IPR031322">
    <property type="entry name" value="Shikimate/glucono_kinase"/>
</dbReference>
<dbReference type="InterPro" id="IPR000623">
    <property type="entry name" value="Shikimate_kinase/TSH1"/>
</dbReference>
<dbReference type="InterPro" id="IPR023000">
    <property type="entry name" value="Shikimate_kinase_CS"/>
</dbReference>
<dbReference type="PANTHER" id="PTHR21087">
    <property type="entry name" value="SHIKIMATE KINASE"/>
    <property type="match status" value="1"/>
</dbReference>
<dbReference type="PANTHER" id="PTHR21087:SF16">
    <property type="entry name" value="SHIKIMATE KINASE 1, CHLOROPLASTIC"/>
    <property type="match status" value="1"/>
</dbReference>
<dbReference type="Pfam" id="PF01202">
    <property type="entry name" value="SKI"/>
    <property type="match status" value="1"/>
</dbReference>
<dbReference type="PRINTS" id="PR01100">
    <property type="entry name" value="SHIKIMTKNASE"/>
</dbReference>
<dbReference type="SUPFAM" id="SSF52540">
    <property type="entry name" value="P-loop containing nucleoside triphosphate hydrolases"/>
    <property type="match status" value="1"/>
</dbReference>
<dbReference type="PROSITE" id="PS01128">
    <property type="entry name" value="SHIKIMATE_KINASE"/>
    <property type="match status" value="1"/>
</dbReference>
<name>AROK_STREM</name>
<sequence>MTKLLLGFMGVGKTTVAAQLDEHFLDMDRLIEAKIGMSISAFFSYRGEAAFRKLESDTLQEVLALDNETIVSTGGGVVLSKANRELIRKNHKHNILLTASFEVLYDRLKKDRLCQRPLFLNHSKAEFYAIFQQRMALYEGLADKVINVEHRTPKEVAAIIANMS</sequence>
<evidence type="ECO:0000255" key="1">
    <source>
        <dbReference type="HAMAP-Rule" id="MF_00109"/>
    </source>
</evidence>
<comment type="function">
    <text evidence="1">Catalyzes the specific phosphorylation of the 3-hydroxyl group of shikimic acid using ATP as a cosubstrate.</text>
</comment>
<comment type="catalytic activity">
    <reaction evidence="1">
        <text>shikimate + ATP = 3-phosphoshikimate + ADP + H(+)</text>
        <dbReference type="Rhea" id="RHEA:13121"/>
        <dbReference type="ChEBI" id="CHEBI:15378"/>
        <dbReference type="ChEBI" id="CHEBI:30616"/>
        <dbReference type="ChEBI" id="CHEBI:36208"/>
        <dbReference type="ChEBI" id="CHEBI:145989"/>
        <dbReference type="ChEBI" id="CHEBI:456216"/>
        <dbReference type="EC" id="2.7.1.71"/>
    </reaction>
</comment>
<comment type="cofactor">
    <cofactor evidence="1">
        <name>Mg(2+)</name>
        <dbReference type="ChEBI" id="CHEBI:18420"/>
    </cofactor>
    <text evidence="1">Binds 1 Mg(2+) ion per subunit.</text>
</comment>
<comment type="pathway">
    <text evidence="1">Metabolic intermediate biosynthesis; chorismate biosynthesis; chorismate from D-erythrose 4-phosphate and phosphoenolpyruvate: step 5/7.</text>
</comment>
<comment type="subunit">
    <text evidence="1">Monomer.</text>
</comment>
<comment type="subcellular location">
    <subcellularLocation>
        <location evidence="1">Cytoplasm</location>
    </subcellularLocation>
</comment>
<comment type="similarity">
    <text evidence="1">Belongs to the shikimate kinase family.</text>
</comment>
<gene>
    <name evidence="1" type="primary">aroK</name>
    <name type="ordered locus">Sez_0701</name>
</gene>
<accession>B4U247</accession>
<keyword id="KW-0028">Amino-acid biosynthesis</keyword>
<keyword id="KW-0057">Aromatic amino acid biosynthesis</keyword>
<keyword id="KW-0067">ATP-binding</keyword>
<keyword id="KW-0963">Cytoplasm</keyword>
<keyword id="KW-0418">Kinase</keyword>
<keyword id="KW-0460">Magnesium</keyword>
<keyword id="KW-0479">Metal-binding</keyword>
<keyword id="KW-0547">Nucleotide-binding</keyword>
<keyword id="KW-0808">Transferase</keyword>